<protein>
    <recommendedName>
        <fullName evidence="1">Histidine ammonia-lyase</fullName>
        <shortName evidence="1">Histidase</shortName>
        <ecNumber evidence="1">4.3.1.3</ecNumber>
    </recommendedName>
</protein>
<proteinExistence type="inferred from homology"/>
<keyword id="KW-0963">Cytoplasm</keyword>
<keyword id="KW-0369">Histidine metabolism</keyword>
<keyword id="KW-0456">Lyase</keyword>
<gene>
    <name evidence="1" type="primary">hutH</name>
    <name type="ordered locus">swp_0134</name>
</gene>
<comment type="catalytic activity">
    <reaction evidence="1">
        <text>L-histidine = trans-urocanate + NH4(+)</text>
        <dbReference type="Rhea" id="RHEA:21232"/>
        <dbReference type="ChEBI" id="CHEBI:17771"/>
        <dbReference type="ChEBI" id="CHEBI:28938"/>
        <dbReference type="ChEBI" id="CHEBI:57595"/>
        <dbReference type="EC" id="4.3.1.3"/>
    </reaction>
</comment>
<comment type="pathway">
    <text evidence="1">Amino-acid degradation; L-histidine degradation into L-glutamate; N-formimidoyl-L-glutamate from L-histidine: step 1/3.</text>
</comment>
<comment type="subcellular location">
    <subcellularLocation>
        <location evidence="1">Cytoplasm</location>
    </subcellularLocation>
</comment>
<comment type="PTM">
    <text evidence="1">Contains an active site 4-methylidene-imidazol-5-one (MIO), which is formed autocatalytically by cyclization and dehydration of residues Ala-Ser-Gly.</text>
</comment>
<comment type="similarity">
    <text evidence="1">Belongs to the PAL/histidase family.</text>
</comment>
<name>HUTH_SHEPW</name>
<accession>B8CGY5</accession>
<sequence>MSHLVLTPGSLTLKQIREISRGKVTLELADSAIADINTSAGLVQQVLDEGRTVYGINTGFGLLANTKIAADDLQLLQRSIVLSHAAGTGQYMQDATVRLMMVLKINSLSRGFSGIRLEVINFLIALVNAEVYPCVPEKGSVGASGDLAPLSHMCLPLLAEGEMSYKGQLITAAEGLEIAGLKPLELAAKEGLALLNGTQASTALALEGLFNAEDLFAASSVIGAMSVEAAMGSRSPFDSRIHAARGQKGQIDSAAVFRHLLGDESEISLDHVNCEKVQDPYSLRCQPQVLGACLTQIRHAAEVLGTEANGVTDNPLVFQDTGDIISGGNFHAEPVAMAADNLAIAIAELGSIAERRIALLIDSNLSKLPPFLVENGGVNSGFMIAQVTAAALASENKTYAHPASVDSLPTSANQEDHVSMATFAARRLRDMSENTRGVLAVELLAAAQGLDFRRPLQPAVAVAKAKAELRELVTYYDKDRFFGPDIEAATDLLITASYNAYLPADILPSW</sequence>
<dbReference type="EC" id="4.3.1.3" evidence="1"/>
<dbReference type="EMBL" id="CP000472">
    <property type="protein sequence ID" value="ACJ26978.1"/>
    <property type="molecule type" value="Genomic_DNA"/>
</dbReference>
<dbReference type="RefSeq" id="WP_020910362.1">
    <property type="nucleotide sequence ID" value="NC_011566.1"/>
</dbReference>
<dbReference type="SMR" id="B8CGY5"/>
<dbReference type="STRING" id="225849.swp_0134"/>
<dbReference type="KEGG" id="swp:swp_0134"/>
<dbReference type="eggNOG" id="COG2986">
    <property type="taxonomic scope" value="Bacteria"/>
</dbReference>
<dbReference type="HOGENOM" id="CLU_014801_4_0_6"/>
<dbReference type="OrthoDB" id="9806955at2"/>
<dbReference type="UniPathway" id="UPA00379">
    <property type="reaction ID" value="UER00549"/>
</dbReference>
<dbReference type="Proteomes" id="UP000000753">
    <property type="component" value="Chromosome"/>
</dbReference>
<dbReference type="GO" id="GO:0005737">
    <property type="term" value="C:cytoplasm"/>
    <property type="evidence" value="ECO:0007669"/>
    <property type="project" value="UniProtKB-SubCell"/>
</dbReference>
<dbReference type="GO" id="GO:0004397">
    <property type="term" value="F:histidine ammonia-lyase activity"/>
    <property type="evidence" value="ECO:0007669"/>
    <property type="project" value="UniProtKB-UniRule"/>
</dbReference>
<dbReference type="GO" id="GO:0019556">
    <property type="term" value="P:L-histidine catabolic process to glutamate and formamide"/>
    <property type="evidence" value="ECO:0007669"/>
    <property type="project" value="UniProtKB-UniPathway"/>
</dbReference>
<dbReference type="GO" id="GO:0019557">
    <property type="term" value="P:L-histidine catabolic process to glutamate and formate"/>
    <property type="evidence" value="ECO:0007669"/>
    <property type="project" value="UniProtKB-UniPathway"/>
</dbReference>
<dbReference type="CDD" id="cd00332">
    <property type="entry name" value="PAL-HAL"/>
    <property type="match status" value="1"/>
</dbReference>
<dbReference type="FunFam" id="1.10.275.10:FF:000005">
    <property type="entry name" value="Histidine ammonia-lyase"/>
    <property type="match status" value="1"/>
</dbReference>
<dbReference type="FunFam" id="1.20.200.10:FF:000003">
    <property type="entry name" value="Histidine ammonia-lyase"/>
    <property type="match status" value="1"/>
</dbReference>
<dbReference type="Gene3D" id="1.20.200.10">
    <property type="entry name" value="Fumarase/aspartase (Central domain)"/>
    <property type="match status" value="1"/>
</dbReference>
<dbReference type="Gene3D" id="1.10.275.10">
    <property type="entry name" value="Fumarase/aspartase (N-terminal domain)"/>
    <property type="match status" value="1"/>
</dbReference>
<dbReference type="HAMAP" id="MF_00229">
    <property type="entry name" value="His_ammonia_lyase"/>
    <property type="match status" value="1"/>
</dbReference>
<dbReference type="InterPro" id="IPR001106">
    <property type="entry name" value="Aromatic_Lyase"/>
</dbReference>
<dbReference type="InterPro" id="IPR024083">
    <property type="entry name" value="Fumarase/histidase_N"/>
</dbReference>
<dbReference type="InterPro" id="IPR005921">
    <property type="entry name" value="HutH"/>
</dbReference>
<dbReference type="InterPro" id="IPR008948">
    <property type="entry name" value="L-Aspartase-like"/>
</dbReference>
<dbReference type="InterPro" id="IPR022313">
    <property type="entry name" value="Phe/His_NH3-lyase_AS"/>
</dbReference>
<dbReference type="NCBIfam" id="TIGR01225">
    <property type="entry name" value="hutH"/>
    <property type="match status" value="1"/>
</dbReference>
<dbReference type="NCBIfam" id="NF006871">
    <property type="entry name" value="PRK09367.1"/>
    <property type="match status" value="1"/>
</dbReference>
<dbReference type="PANTHER" id="PTHR10362">
    <property type="entry name" value="HISTIDINE AMMONIA-LYASE"/>
    <property type="match status" value="1"/>
</dbReference>
<dbReference type="Pfam" id="PF00221">
    <property type="entry name" value="Lyase_aromatic"/>
    <property type="match status" value="1"/>
</dbReference>
<dbReference type="SUPFAM" id="SSF48557">
    <property type="entry name" value="L-aspartase-like"/>
    <property type="match status" value="1"/>
</dbReference>
<dbReference type="PROSITE" id="PS00488">
    <property type="entry name" value="PAL_HISTIDASE"/>
    <property type="match status" value="1"/>
</dbReference>
<evidence type="ECO:0000255" key="1">
    <source>
        <dbReference type="HAMAP-Rule" id="MF_00229"/>
    </source>
</evidence>
<feature type="chain" id="PRO_1000190492" description="Histidine ammonia-lyase">
    <location>
        <begin position="1"/>
        <end position="510"/>
    </location>
</feature>
<feature type="modified residue" description="2,3-didehydroalanine (Ser)" evidence="1">
    <location>
        <position position="144"/>
    </location>
</feature>
<feature type="cross-link" description="5-imidazolinone (Ala-Gly)" evidence="1">
    <location>
        <begin position="143"/>
        <end position="145"/>
    </location>
</feature>
<reference key="1">
    <citation type="journal article" date="2008" name="PLoS ONE">
        <title>Environmental adaptation: genomic analysis of the piezotolerant and psychrotolerant deep-sea iron reducing bacterium Shewanella piezotolerans WP3.</title>
        <authorList>
            <person name="Wang F."/>
            <person name="Wang J."/>
            <person name="Jian H."/>
            <person name="Zhang B."/>
            <person name="Li S."/>
            <person name="Wang F."/>
            <person name="Zeng X."/>
            <person name="Gao L."/>
            <person name="Bartlett D.H."/>
            <person name="Yu J."/>
            <person name="Hu S."/>
            <person name="Xiao X."/>
        </authorList>
    </citation>
    <scope>NUCLEOTIDE SEQUENCE [LARGE SCALE GENOMIC DNA]</scope>
    <source>
        <strain>WP3 / JCM 13877</strain>
    </source>
</reference>
<organism>
    <name type="scientific">Shewanella piezotolerans (strain WP3 / JCM 13877)</name>
    <dbReference type="NCBI Taxonomy" id="225849"/>
    <lineage>
        <taxon>Bacteria</taxon>
        <taxon>Pseudomonadati</taxon>
        <taxon>Pseudomonadota</taxon>
        <taxon>Gammaproteobacteria</taxon>
        <taxon>Alteromonadales</taxon>
        <taxon>Shewanellaceae</taxon>
        <taxon>Shewanella</taxon>
    </lineage>
</organism>